<protein>
    <recommendedName>
        <fullName evidence="1">Large ribosomal subunit protein uL6</fullName>
    </recommendedName>
    <alternativeName>
        <fullName evidence="2">50S ribosomal protein L6</fullName>
    </alternativeName>
</protein>
<name>RL6_SALA4</name>
<evidence type="ECO:0000255" key="1">
    <source>
        <dbReference type="HAMAP-Rule" id="MF_01365"/>
    </source>
</evidence>
<evidence type="ECO:0000305" key="2"/>
<feature type="chain" id="PRO_1000144040" description="Large ribosomal subunit protein uL6">
    <location>
        <begin position="1"/>
        <end position="177"/>
    </location>
</feature>
<organism>
    <name type="scientific">Salmonella agona (strain SL483)</name>
    <dbReference type="NCBI Taxonomy" id="454166"/>
    <lineage>
        <taxon>Bacteria</taxon>
        <taxon>Pseudomonadati</taxon>
        <taxon>Pseudomonadota</taxon>
        <taxon>Gammaproteobacteria</taxon>
        <taxon>Enterobacterales</taxon>
        <taxon>Enterobacteriaceae</taxon>
        <taxon>Salmonella</taxon>
    </lineage>
</organism>
<dbReference type="EMBL" id="CP001138">
    <property type="protein sequence ID" value="ACH49481.1"/>
    <property type="molecule type" value="Genomic_DNA"/>
</dbReference>
<dbReference type="RefSeq" id="WP_000091939.1">
    <property type="nucleotide sequence ID" value="NC_011149.1"/>
</dbReference>
<dbReference type="SMR" id="B5F7T0"/>
<dbReference type="KEGG" id="sea:SeAg_B3621"/>
<dbReference type="HOGENOM" id="CLU_065464_1_2_6"/>
<dbReference type="Proteomes" id="UP000008819">
    <property type="component" value="Chromosome"/>
</dbReference>
<dbReference type="GO" id="GO:0022625">
    <property type="term" value="C:cytosolic large ribosomal subunit"/>
    <property type="evidence" value="ECO:0007669"/>
    <property type="project" value="TreeGrafter"/>
</dbReference>
<dbReference type="GO" id="GO:0019843">
    <property type="term" value="F:rRNA binding"/>
    <property type="evidence" value="ECO:0007669"/>
    <property type="project" value="UniProtKB-UniRule"/>
</dbReference>
<dbReference type="GO" id="GO:0003735">
    <property type="term" value="F:structural constituent of ribosome"/>
    <property type="evidence" value="ECO:0007669"/>
    <property type="project" value="InterPro"/>
</dbReference>
<dbReference type="GO" id="GO:0002181">
    <property type="term" value="P:cytoplasmic translation"/>
    <property type="evidence" value="ECO:0007669"/>
    <property type="project" value="TreeGrafter"/>
</dbReference>
<dbReference type="FunFam" id="3.90.930.12:FF:000001">
    <property type="entry name" value="50S ribosomal protein L6"/>
    <property type="match status" value="1"/>
</dbReference>
<dbReference type="FunFam" id="3.90.930.12:FF:000002">
    <property type="entry name" value="50S ribosomal protein L6"/>
    <property type="match status" value="1"/>
</dbReference>
<dbReference type="Gene3D" id="3.90.930.12">
    <property type="entry name" value="Ribosomal protein L6, alpha-beta domain"/>
    <property type="match status" value="2"/>
</dbReference>
<dbReference type="HAMAP" id="MF_01365_B">
    <property type="entry name" value="Ribosomal_uL6_B"/>
    <property type="match status" value="1"/>
</dbReference>
<dbReference type="InterPro" id="IPR000702">
    <property type="entry name" value="Ribosomal_uL6-like"/>
</dbReference>
<dbReference type="InterPro" id="IPR036789">
    <property type="entry name" value="Ribosomal_uL6-like_a/b-dom_sf"/>
</dbReference>
<dbReference type="InterPro" id="IPR020040">
    <property type="entry name" value="Ribosomal_uL6_a/b-dom"/>
</dbReference>
<dbReference type="InterPro" id="IPR019906">
    <property type="entry name" value="Ribosomal_uL6_bac-type"/>
</dbReference>
<dbReference type="InterPro" id="IPR002358">
    <property type="entry name" value="Ribosomal_uL6_CS"/>
</dbReference>
<dbReference type="NCBIfam" id="TIGR03654">
    <property type="entry name" value="L6_bact"/>
    <property type="match status" value="1"/>
</dbReference>
<dbReference type="PANTHER" id="PTHR11655">
    <property type="entry name" value="60S/50S RIBOSOMAL PROTEIN L6/L9"/>
    <property type="match status" value="1"/>
</dbReference>
<dbReference type="PANTHER" id="PTHR11655:SF14">
    <property type="entry name" value="LARGE RIBOSOMAL SUBUNIT PROTEIN UL6M"/>
    <property type="match status" value="1"/>
</dbReference>
<dbReference type="Pfam" id="PF00347">
    <property type="entry name" value="Ribosomal_L6"/>
    <property type="match status" value="2"/>
</dbReference>
<dbReference type="PIRSF" id="PIRSF002162">
    <property type="entry name" value="Ribosomal_L6"/>
    <property type="match status" value="1"/>
</dbReference>
<dbReference type="PRINTS" id="PR00059">
    <property type="entry name" value="RIBOSOMALL6"/>
</dbReference>
<dbReference type="SUPFAM" id="SSF56053">
    <property type="entry name" value="Ribosomal protein L6"/>
    <property type="match status" value="2"/>
</dbReference>
<dbReference type="PROSITE" id="PS00525">
    <property type="entry name" value="RIBOSOMAL_L6_1"/>
    <property type="match status" value="1"/>
</dbReference>
<sequence length="177" mass="18860">MSRVAKAPVVVPAGVDVKINGQVITIKGKNGELTRTLNDAVEVKHADNALTFGPRDGYADGWAQAGTARALLNSMVIGVTEGFTKKLQLVGVGYRAAVKGNVVNLSLGFSHPVDHQLPAGITAECPTQTEIVLKGADKQVIGQVAADLRAYRRPEPYKGKGVRYADEVVRTKEAKKK</sequence>
<gene>
    <name evidence="1" type="primary">rplF</name>
    <name type="ordered locus">SeAg_B3621</name>
</gene>
<keyword id="KW-0687">Ribonucleoprotein</keyword>
<keyword id="KW-0689">Ribosomal protein</keyword>
<keyword id="KW-0694">RNA-binding</keyword>
<keyword id="KW-0699">rRNA-binding</keyword>
<comment type="function">
    <text evidence="1">This protein binds to the 23S rRNA, and is important in its secondary structure. It is located near the subunit interface in the base of the L7/L12 stalk, and near the tRNA binding site of the peptidyltransferase center.</text>
</comment>
<comment type="subunit">
    <text evidence="1">Part of the 50S ribosomal subunit.</text>
</comment>
<comment type="similarity">
    <text evidence="1">Belongs to the universal ribosomal protein uL6 family.</text>
</comment>
<accession>B5F7T0</accession>
<proteinExistence type="inferred from homology"/>
<reference key="1">
    <citation type="journal article" date="2011" name="J. Bacteriol.">
        <title>Comparative genomics of 28 Salmonella enterica isolates: evidence for CRISPR-mediated adaptive sublineage evolution.</title>
        <authorList>
            <person name="Fricke W.F."/>
            <person name="Mammel M.K."/>
            <person name="McDermott P.F."/>
            <person name="Tartera C."/>
            <person name="White D.G."/>
            <person name="Leclerc J.E."/>
            <person name="Ravel J."/>
            <person name="Cebula T.A."/>
        </authorList>
    </citation>
    <scope>NUCLEOTIDE SEQUENCE [LARGE SCALE GENOMIC DNA]</scope>
    <source>
        <strain>SL483</strain>
    </source>
</reference>